<comment type="function">
    <text evidence="10">Non-reducing polyketide synthase; part of the satratoxin SC1 cluster involved in the biosynthesis of satratoxins, trichothecene mycotoxins that are associated with human food poisonings (PubMed:25015739). Satratoxins are suggested to be made by products of multiple gene clusters (SC1, SC2 and SC3) that encode 21 proteins in all, including polyketide synthases, acetyltransferases, and other enzymes expected to modify the trichothecene skeleton (PubMed:25015739). SC1 encodes 10 proteins, SAT1 to SAT10 (PubMed:25015739). The largest are SAT8, which encodes a putative polyketide synthase (PKS) with a conventional non-reducing architecture, and SAT10, a putative protein containing four ankyrin repeats and thus may be involved in protein scaffolding (PubMed:25015739). The putative short-chain reductase SAT3 may assist the PKS in some capacity (PubMed:25015739). SAT6 contains a secretory lipase domain and acts probably as a trichothecene esterase (PubMed:25015739). SAT5 encodes a putative acetyltransferase, and so, with SAT6, may affect endogenous protection from toxicity (PubMed:25015739). The probable transcription factor SAT9 may regulate the expression of the SC1 cluster (PubMed:25015739). SC2 encodes proteins SAT11 to SAT16, the largest of which encodes the putative reducing PKS SAT13 (PubMed:25015739). SAT11 is a cytochrome P450 monooxygenase, while SAT14 and SAT16 are probable acetyltransferases (PubMed:25015739). The SC2 cluster may be regulated by the transcription factor SAT15 (PubMed:25015739). SC3 is a small cluster that encodes 5 proteins, SAT17 to SAT21 (PubMed:25015739). SAT21 is a putative MFS-type transporter which may have a role in exporting secondary metabolites (PubMed:25015739). The four other proteins putatively encoded in SC3 include the taurine hydroxylase-like protein SAT17, the O-methyltransferase SAT18, the acetyltransferase SAT19, and the Cys6-type zinc finger SAT20, the latter being probably involved in regulation of SC3 expression (PubMed:25015739).</text>
</comment>
<comment type="cofactor">
    <cofactor evidence="2">
        <name>pantetheine 4'-phosphate</name>
        <dbReference type="ChEBI" id="CHEBI:47942"/>
    </cofactor>
    <text evidence="2">Binds 1 phosphopantetheine covalently.</text>
</comment>
<comment type="pathway">
    <text evidence="7">Mycotoxin biosynthesis.</text>
</comment>
<comment type="domain">
    <text evidence="10">Multidomain protein; including an N-terminal starter unit:ACP transacylase (SAT) domain, a beta-ketoacyl synthase (KS) domain, a malonyl-CoA:ACP transacylase (MAT) domain, a product template domain, a acyl carrier protein (ACP) domain, a methyltransferase domain and a reductive NADPH-binding domain that is required for NADPH-dependent product release (PubMed:25015739).</text>
</comment>
<comment type="miscellaneous">
    <text evidence="9">Trichothecenes are sesquiterpenoid toxins that act by inhibiting protein biosynthesis.</text>
</comment>
<protein>
    <recommendedName>
        <fullName evidence="8">Non-reducing polyketide synthase SAT8</fullName>
        <ecNumber evidence="10">2.3.1.-</ecNumber>
    </recommendedName>
    <alternativeName>
        <fullName evidence="8">Satratoxin biosynthesis SC1 cluster protein 8</fullName>
    </alternativeName>
</protein>
<gene>
    <name evidence="8" type="primary">SAT8</name>
    <name type="ORF">S7711_07282</name>
</gene>
<reference key="1">
    <citation type="journal article" date="2014" name="BMC Genomics">
        <title>Comparative genome sequencing reveals chemotype-specific gene clusters in the toxigenic black mold Stachybotrys.</title>
        <authorList>
            <person name="Semeiks J."/>
            <person name="Borek D."/>
            <person name="Otwinowski Z."/>
            <person name="Grishin N.V."/>
        </authorList>
    </citation>
    <scope>NUCLEOTIDE SEQUENCE [LARGE SCALE GENOMIC DNA]</scope>
    <scope>IDENTIFICATION</scope>
    <scope>FUNCTION</scope>
    <source>
        <strain>CBS 109288 / IBT 7711</strain>
    </source>
</reference>
<name>SAT8_STACB</name>
<proteinExistence type="inferred from homology"/>
<sequence>MATTLLLFGPQAASMSKQSITQLQVALRDQEWAFDALSNVQPIIQRASTSISGLDQISLDERLADLTRWLKHGPKDQEELAEIPNIMLAPLTTLSHLVQYRRYIERHYPNESDAHAALLQQKPVATLGFCNGLLAAFATTSSATLNDWERYAAVATRLALLVGAVIDAADELQPHGPAASYGVSWRDIDGARQLEQILSPFPGDAYVSVWYDRSRATVTVSKHLVRTVLHLVEAAGMAVVPVRLRGRYHSRQHAEVAEALIRLCDAEPDLLALPDARNLCLPTYSNVGHGEVVREGRLHEIALQAMLVQQCDWYSTLSGITDESQVQVVCLSEVSTLPPSLTFKLKPQMEYFAPLEEKTAPKDNFSGRADGGSQFSFSMLENSTSPPSPAATSSNSHCEYSVDPRDIAIVGMSVKVAGADDVVEYESILRGGVSQHQQVRKNRVPFGYNSFRPEEPGHKWYGNFVRDVDAFDHKFFRKSSRESAAMDPQQRLVLQAAYQAVEQSGYYASGTEPDQHIGVYLGTCATDYEQNANCHAPGAFTVTGLLRGFIAGRISHFFGWTGPAMTYDTACSGSAVAIHSAVQALVSGECSAALAGGVNTIGNEVWFQNLAGAQFLSPTGQCKPFDDAADGYCRGEGIACVVLKPMAKAIADGNQIFGRIASSAVHQSVNCTPLFVPNVPSLSRLFGDVMRQARLEPHDISFVEAHGTGTPVGDPVEYESIRAILGGPLRDKPLSLGSAKGLVGHTESTSGVVSLVKVLLMMQSGFIPPQASYSKLSHRIAPSASAMIQVSTTLQPWTDSYKAALINNYGASGSNAAMVVTQGPAQTARSPRGEADGAHLPFWIPGFDSARIAAYCARLSAFIEANRSTIHLADIAYNISRQSNRTLSHALLFRCNSIDSLVGQLSSAAAPQTVQVKPSRPVILCFGGQMSTFVGLNREIYDSSPILRDHLSQCDAAIRALGFGSIFPSIFATIPIEDTVLLQTVLFSFQYACAKSWIDCGVRPTAVVGHSFGEITALCIAEVLSLDDTIKLVTRRAKVVRDSWGADRGVMMAVEGEVDQVERLLEEANKDLDTHSPASIACYNGLRNFTLAGSTLAMERVALALSSSAYASIRGKKLNVTNAFHSALVDPLLQELEQAGSDLTFNKARIKVERATKESTTGEPCAPKFVGEHMRNPVFFRQAAQRLARDNPSAVWIEAGSATKITAMARRSLDSNAESHFQGITVTGEDGLDKLTEATLSLWKQGLNVAFWAHHGPQATRDHQPLLLPPYQFEKSRHWLDVKAPPVMLADTAQGDNGPLFGLLTFVGFQDAEERRARFKINTESERYKSLVIPHIIARTAPICPATLEYSLAIQALLTLRDHKHFESRDMHPVIRDMRNDAPLCLNSDQSTWLDLEANKTSPRSLVWKVFTAPVSRQLDSHNDSDETLCAQGKLDLLSSSETTEFAQYEQLATYDACVSLLQDDDGDVSGLQGRSVYRSLADVVDYGVHYQKVRRVSGRNSESAGIVRGASGGNWLSDLPIIDSFSQVAGVWVNCLADRTPGSDDLFLATGCETIMTSPTFLHADRGGKSWHVWAKHHRESERSYRTDVLVFDATNGQLADVFLGIAYTRIPRHSMTRLLSKLSEPSALQAQAALPSSTGHEGLTAKTASSQRLGQDTLKQTVGQIIASLSGVEAAQITDESALADIGIDSLAGMELARDIESVLGCKLDLEELLFTHDTFGAFVRYISKVVNGEDDLGTPSHSDNDSHVTGTTATPNSSSASSDTHHGNSKLQIAVAQSSQADASSSSPLPPQHVISSFEQVKLSTDQRIREEKADNTDDIIVSRSNLLCVALVVEAFEQLGCPLRGVPAGEALKRIQHAPQHARLVDWLYRFLEDEARLINTEGTLILRTSNGAPNKTSQAIFQDLEHANDRWIESHRLANYAGKNLADVVSGKKEGIHVLFGSAEGRELVRGLYSGLPFNCLFYKQVRDTISLIVEKVKDDFQGPLRILEMGAGTGGTTQVLAPFLATLDIPVEYTMTDLSPYMVAQAQRSFGTKYPFMHFAVHDIEKPPAESLLGTQHIIVASNAVHATANLADSAANIRSTLRPDGILLLVEMTESLPFVDIVFGLLEGWWRFADGREHAIVPAEQWEARLRDAGYGHVDWTDGVFSENRLQKVILAMASELPDGLPVSSGVPEPVQPALEVTTTVAREANAEAYVTQYSADFTYDGESSGNIEAHEAQDSRIVVVTGATGSLGSHMVASFAESPSVTSVVCINRRNSGKATALERQQEAFTSRGITLSPDAFGKLRVFATDTAQPQLGLPLEEYEWLVTHATHIVHNAWPMSASRPIQAFQPQFKTMSRLLDLAAAIAQQSTSRFVVFQLISSIGVVGSAPMIDTRVPERRVPVSYTLPNGYCEAKWVCEQLLNETLHQYPERFRAMVVRPGQIAGSSVNGVWNPVEHFPALVRSSQALRAFPALGGTLQWIPVDVAAGTVADLALNQQAGEPVYHIDNPVGQSWSNMVPILADELNIPGERIIPLGEWVRKVKRSSLLETENPASRLPDFFEQHFERMSCGGLILDVALATKRSGTLAAQGAVSADTARKYIQTWKDMKFLDRY</sequence>
<dbReference type="EC" id="2.3.1.-" evidence="10"/>
<dbReference type="EMBL" id="KL647604">
    <property type="protein sequence ID" value="KEY74375.1"/>
    <property type="molecule type" value="Genomic_DNA"/>
</dbReference>
<dbReference type="SMR" id="A0A084B9Z6"/>
<dbReference type="HOGENOM" id="CLU_000022_6_2_1"/>
<dbReference type="OrthoDB" id="62332at5125"/>
<dbReference type="Proteomes" id="UP000028045">
    <property type="component" value="Unassembled WGS sequence"/>
</dbReference>
<dbReference type="GO" id="GO:0004312">
    <property type="term" value="F:fatty acid synthase activity"/>
    <property type="evidence" value="ECO:0007669"/>
    <property type="project" value="TreeGrafter"/>
</dbReference>
<dbReference type="GO" id="GO:0008168">
    <property type="term" value="F:methyltransferase activity"/>
    <property type="evidence" value="ECO:0007669"/>
    <property type="project" value="UniProtKB-KW"/>
</dbReference>
<dbReference type="GO" id="GO:0031177">
    <property type="term" value="F:phosphopantetheine binding"/>
    <property type="evidence" value="ECO:0007669"/>
    <property type="project" value="InterPro"/>
</dbReference>
<dbReference type="GO" id="GO:0006633">
    <property type="term" value="P:fatty acid biosynthetic process"/>
    <property type="evidence" value="ECO:0007669"/>
    <property type="project" value="TreeGrafter"/>
</dbReference>
<dbReference type="GO" id="GO:0032259">
    <property type="term" value="P:methylation"/>
    <property type="evidence" value="ECO:0007669"/>
    <property type="project" value="UniProtKB-KW"/>
</dbReference>
<dbReference type="GO" id="GO:0044550">
    <property type="term" value="P:secondary metabolite biosynthetic process"/>
    <property type="evidence" value="ECO:0007669"/>
    <property type="project" value="TreeGrafter"/>
</dbReference>
<dbReference type="CDD" id="cd02440">
    <property type="entry name" value="AdoMet_MTases"/>
    <property type="match status" value="1"/>
</dbReference>
<dbReference type="CDD" id="cd00833">
    <property type="entry name" value="PKS"/>
    <property type="match status" value="1"/>
</dbReference>
<dbReference type="Gene3D" id="3.30.70.3290">
    <property type="match status" value="1"/>
</dbReference>
<dbReference type="Gene3D" id="3.40.47.10">
    <property type="match status" value="1"/>
</dbReference>
<dbReference type="Gene3D" id="1.10.1200.10">
    <property type="entry name" value="ACP-like"/>
    <property type="match status" value="1"/>
</dbReference>
<dbReference type="Gene3D" id="3.40.366.10">
    <property type="entry name" value="Malonyl-Coenzyme A Acyl Carrier Protein, domain 2"/>
    <property type="match status" value="2"/>
</dbReference>
<dbReference type="Gene3D" id="3.40.50.720">
    <property type="entry name" value="NAD(P)-binding Rossmann-like Domain"/>
    <property type="match status" value="1"/>
</dbReference>
<dbReference type="Gene3D" id="3.10.129.110">
    <property type="entry name" value="Polyketide synthase dehydratase"/>
    <property type="match status" value="1"/>
</dbReference>
<dbReference type="Gene3D" id="3.40.50.150">
    <property type="entry name" value="Vaccinia Virus protein VP39"/>
    <property type="match status" value="1"/>
</dbReference>
<dbReference type="InterPro" id="IPR001227">
    <property type="entry name" value="Ac_transferase_dom_sf"/>
</dbReference>
<dbReference type="InterPro" id="IPR036736">
    <property type="entry name" value="ACP-like_sf"/>
</dbReference>
<dbReference type="InterPro" id="IPR014043">
    <property type="entry name" value="Acyl_transferase_dom"/>
</dbReference>
<dbReference type="InterPro" id="IPR016035">
    <property type="entry name" value="Acyl_Trfase/lysoPLipase"/>
</dbReference>
<dbReference type="InterPro" id="IPR013120">
    <property type="entry name" value="Far_NAD-bd"/>
</dbReference>
<dbReference type="InterPro" id="IPR014031">
    <property type="entry name" value="Ketoacyl_synth_C"/>
</dbReference>
<dbReference type="InterPro" id="IPR014030">
    <property type="entry name" value="Ketoacyl_synth_N"/>
</dbReference>
<dbReference type="InterPro" id="IPR016036">
    <property type="entry name" value="Malonyl_transacylase_ACP-bd"/>
</dbReference>
<dbReference type="InterPro" id="IPR013217">
    <property type="entry name" value="Methyltransf_12"/>
</dbReference>
<dbReference type="InterPro" id="IPR036291">
    <property type="entry name" value="NAD(P)-bd_dom_sf"/>
</dbReference>
<dbReference type="InterPro" id="IPR020841">
    <property type="entry name" value="PKS_Beta-ketoAc_synthase_dom"/>
</dbReference>
<dbReference type="InterPro" id="IPR042104">
    <property type="entry name" value="PKS_dehydratase_sf"/>
</dbReference>
<dbReference type="InterPro" id="IPR049900">
    <property type="entry name" value="PKS_mFAS_DH"/>
</dbReference>
<dbReference type="InterPro" id="IPR050091">
    <property type="entry name" value="PKS_NRPS_Biosynth_Enz"/>
</dbReference>
<dbReference type="InterPro" id="IPR020806">
    <property type="entry name" value="PKS_PP-bd"/>
</dbReference>
<dbReference type="InterPro" id="IPR009081">
    <property type="entry name" value="PP-bd_ACP"/>
</dbReference>
<dbReference type="InterPro" id="IPR006162">
    <property type="entry name" value="Ppantetheine_attach_site"/>
</dbReference>
<dbReference type="InterPro" id="IPR029063">
    <property type="entry name" value="SAM-dependent_MTases_sf"/>
</dbReference>
<dbReference type="InterPro" id="IPR032088">
    <property type="entry name" value="SAT"/>
</dbReference>
<dbReference type="InterPro" id="IPR016039">
    <property type="entry name" value="Thiolase-like"/>
</dbReference>
<dbReference type="PANTHER" id="PTHR43775">
    <property type="entry name" value="FATTY ACID SYNTHASE"/>
    <property type="match status" value="1"/>
</dbReference>
<dbReference type="PANTHER" id="PTHR43775:SF14">
    <property type="entry name" value="ITERATIVE POLYKETIDE SYNTHASE AFOE-RELATED"/>
    <property type="match status" value="1"/>
</dbReference>
<dbReference type="Pfam" id="PF00698">
    <property type="entry name" value="Acyl_transf_1"/>
    <property type="match status" value="1"/>
</dbReference>
<dbReference type="Pfam" id="PF18558">
    <property type="entry name" value="HTH_51"/>
    <property type="match status" value="1"/>
</dbReference>
<dbReference type="Pfam" id="PF00109">
    <property type="entry name" value="ketoacyl-synt"/>
    <property type="match status" value="1"/>
</dbReference>
<dbReference type="Pfam" id="PF02801">
    <property type="entry name" value="Ketoacyl-synt_C"/>
    <property type="match status" value="1"/>
</dbReference>
<dbReference type="Pfam" id="PF08242">
    <property type="entry name" value="Methyltransf_12"/>
    <property type="match status" value="1"/>
</dbReference>
<dbReference type="Pfam" id="PF07993">
    <property type="entry name" value="NAD_binding_4"/>
    <property type="match status" value="1"/>
</dbReference>
<dbReference type="Pfam" id="PF00550">
    <property type="entry name" value="PP-binding"/>
    <property type="match status" value="1"/>
</dbReference>
<dbReference type="Pfam" id="PF16073">
    <property type="entry name" value="SAT"/>
    <property type="match status" value="1"/>
</dbReference>
<dbReference type="SMART" id="SM00827">
    <property type="entry name" value="PKS_AT"/>
    <property type="match status" value="1"/>
</dbReference>
<dbReference type="SMART" id="SM00825">
    <property type="entry name" value="PKS_KS"/>
    <property type="match status" value="1"/>
</dbReference>
<dbReference type="SMART" id="SM00823">
    <property type="entry name" value="PKS_PP"/>
    <property type="match status" value="1"/>
</dbReference>
<dbReference type="SUPFAM" id="SSF47336">
    <property type="entry name" value="ACP-like"/>
    <property type="match status" value="1"/>
</dbReference>
<dbReference type="SUPFAM" id="SSF52151">
    <property type="entry name" value="FabD/lysophospholipase-like"/>
    <property type="match status" value="1"/>
</dbReference>
<dbReference type="SUPFAM" id="SSF51735">
    <property type="entry name" value="NAD(P)-binding Rossmann-fold domains"/>
    <property type="match status" value="1"/>
</dbReference>
<dbReference type="SUPFAM" id="SSF55048">
    <property type="entry name" value="Probable ACP-binding domain of malonyl-CoA ACP transacylase"/>
    <property type="match status" value="1"/>
</dbReference>
<dbReference type="SUPFAM" id="SSF53335">
    <property type="entry name" value="S-adenosyl-L-methionine-dependent methyltransferases"/>
    <property type="match status" value="1"/>
</dbReference>
<dbReference type="SUPFAM" id="SSF53901">
    <property type="entry name" value="Thiolase-like"/>
    <property type="match status" value="1"/>
</dbReference>
<dbReference type="PROSITE" id="PS50075">
    <property type="entry name" value="CARRIER"/>
    <property type="match status" value="1"/>
</dbReference>
<dbReference type="PROSITE" id="PS52004">
    <property type="entry name" value="KS3_2"/>
    <property type="match status" value="1"/>
</dbReference>
<dbReference type="PROSITE" id="PS00012">
    <property type="entry name" value="PHOSPHOPANTETHEINE"/>
    <property type="match status" value="1"/>
</dbReference>
<dbReference type="PROSITE" id="PS52019">
    <property type="entry name" value="PKS_MFAS_DH"/>
    <property type="match status" value="1"/>
</dbReference>
<feature type="chain" id="PRO_0000442401" description="Non-reducing polyketide synthase SAT8">
    <location>
        <begin position="1"/>
        <end position="2602"/>
    </location>
</feature>
<feature type="domain" description="Ketosynthase family 3 (KS3)" evidence="4">
    <location>
        <begin position="404"/>
        <end position="822"/>
    </location>
</feature>
<feature type="domain" description="PKS/mFAS DH" evidence="5">
    <location>
        <begin position="1298"/>
        <end position="1618"/>
    </location>
</feature>
<feature type="domain" description="Carrier" evidence="3">
    <location>
        <begin position="1658"/>
        <end position="1733"/>
    </location>
</feature>
<feature type="region of interest" description="Disordered" evidence="6">
    <location>
        <begin position="379"/>
        <end position="398"/>
    </location>
</feature>
<feature type="region of interest" description="Malonyl-CoA:ACP transacylase (MAT)" evidence="2">
    <location>
        <begin position="926"/>
        <end position="1216"/>
    </location>
</feature>
<feature type="region of interest" description="N-terminal hotdog fold" evidence="5">
    <location>
        <begin position="1298"/>
        <end position="1442"/>
    </location>
</feature>
<feature type="region of interest" description="Product template (PT) domain" evidence="2">
    <location>
        <begin position="1331"/>
        <end position="1616"/>
    </location>
</feature>
<feature type="region of interest" description="C-terminal hotdog fold" evidence="5">
    <location>
        <begin position="1467"/>
        <end position="1618"/>
    </location>
</feature>
<feature type="region of interest" description="Disordered" evidence="6">
    <location>
        <begin position="1737"/>
        <end position="1772"/>
    </location>
</feature>
<feature type="region of interest" description="Methyltransferase domain" evidence="2">
    <location>
        <begin position="1979"/>
        <end position="2150"/>
    </location>
</feature>
<feature type="region of interest" description="NADPH-binding domain" evidence="2">
    <location>
        <begin position="2229"/>
        <end position="2530"/>
    </location>
</feature>
<feature type="compositionally biased region" description="Low complexity" evidence="6">
    <location>
        <begin position="382"/>
        <end position="396"/>
    </location>
</feature>
<feature type="compositionally biased region" description="Low complexity" evidence="6">
    <location>
        <begin position="1752"/>
        <end position="1765"/>
    </location>
</feature>
<feature type="active site" description="Nucleophile; for transacylase activity" evidence="1">
    <location>
        <position position="130"/>
    </location>
</feature>
<feature type="active site" description="Proton donor/acceptor; for transacylase activity" evidence="1">
    <location>
        <position position="249"/>
    </location>
</feature>
<feature type="active site" description="For beta-ketoacyl synthase activity" evidence="4">
    <location>
        <position position="571"/>
    </location>
</feature>
<feature type="active site" description="For beta-ketoacyl synthase activity" evidence="4">
    <location>
        <position position="706"/>
    </location>
</feature>
<feature type="active site" description="For beta-ketoacyl synthase activity" evidence="4">
    <location>
        <position position="745"/>
    </location>
</feature>
<feature type="active site" description="Proton acceptor; for dehydratase activity" evidence="5">
    <location>
        <position position="1335"/>
    </location>
</feature>
<feature type="active site" description="Proton donor; for dehydratase activity" evidence="5">
    <location>
        <position position="1524"/>
    </location>
</feature>
<feature type="modified residue" description="O-(pantetheine 4'-phosphoryl)serine" evidence="3">
    <location>
        <position position="1692"/>
    </location>
</feature>
<evidence type="ECO:0000250" key="1">
    <source>
        <dbReference type="UniProtKB" id="A0A0K0MCJ4"/>
    </source>
</evidence>
<evidence type="ECO:0000255" key="2"/>
<evidence type="ECO:0000255" key="3">
    <source>
        <dbReference type="PROSITE-ProRule" id="PRU00258"/>
    </source>
</evidence>
<evidence type="ECO:0000255" key="4">
    <source>
        <dbReference type="PROSITE-ProRule" id="PRU01348"/>
    </source>
</evidence>
<evidence type="ECO:0000255" key="5">
    <source>
        <dbReference type="PROSITE-ProRule" id="PRU01363"/>
    </source>
</evidence>
<evidence type="ECO:0000256" key="6">
    <source>
        <dbReference type="SAM" id="MobiDB-lite"/>
    </source>
</evidence>
<evidence type="ECO:0000269" key="7">
    <source>
    </source>
</evidence>
<evidence type="ECO:0000303" key="8">
    <source>
    </source>
</evidence>
<evidence type="ECO:0000305" key="9"/>
<evidence type="ECO:0000305" key="10">
    <source>
    </source>
</evidence>
<keyword id="KW-0012">Acyltransferase</keyword>
<keyword id="KW-0489">Methyltransferase</keyword>
<keyword id="KW-0511">Multifunctional enzyme</keyword>
<keyword id="KW-0521">NADP</keyword>
<keyword id="KW-0596">Phosphopantetheine</keyword>
<keyword id="KW-0597">Phosphoprotein</keyword>
<keyword id="KW-0949">S-adenosyl-L-methionine</keyword>
<keyword id="KW-0808">Transferase</keyword>
<accession>A0A084B9Z6</accession>
<organism>
    <name type="scientific">Stachybotrys chartarum (strain CBS 109288 / IBT 7711)</name>
    <name type="common">Toxic black mold</name>
    <name type="synonym">Stilbospora chartarum</name>
    <dbReference type="NCBI Taxonomy" id="1280523"/>
    <lineage>
        <taxon>Eukaryota</taxon>
        <taxon>Fungi</taxon>
        <taxon>Dikarya</taxon>
        <taxon>Ascomycota</taxon>
        <taxon>Pezizomycotina</taxon>
        <taxon>Sordariomycetes</taxon>
        <taxon>Hypocreomycetidae</taxon>
        <taxon>Hypocreales</taxon>
        <taxon>Stachybotryaceae</taxon>
        <taxon>Stachybotrys</taxon>
    </lineage>
</organism>